<sequence length="705" mass="81504">MTTNSRPSALQAPGLQIFSMLKSSEEDGFMSSSLTLDSDNIIGVTENNRQEFYSTWRKPSLLSSRSVLHEYSPTIVGSNDSTFSPITVGKTTKFFNWDDIISRIFMQQPFGVTHQFFEEFRYSIITSHFLNDMNHYRLSLHLDQSIMNFHKSSTLLKNVPPKSVPFMATKYGKLAVVEDKKLYFRQNFNYLSMIITSYRVLTQLKKYCRRKNSPGLKRVVILILVAVYLSIQQEYFRRHLICYKTLLKVRKVLESLQQVDVMIHKYHLRFKEIKNHSFISRVSLISIADEHSSVIKELLVFSSDALFYKLKSIIPDIVIFSDTSELSKYCELYGIDVPNLYYNNTTTVKDLDGKLYRLKLLKKFMLCCLLSLDMAGNENLSNVNMRNALNKIFPDYMARVQLKKKYNPIGTFQNIVSLLRGLHSLLSTVLVSLNDHKQILYAFPEETSTNTGCERANVCSFSKNDKLFQALNYLKMIENNLLAIDIRNGITENDRNIIEDKLEELITFWKTSKICGNISRIQKVSPTNTINHGFHLDILKGRKSPRSSSVQGLSLERKVDFIDVAESVNDSFENDTELEEYEDYDCQEECSAGSRQNHRVDFIGKDNCRKPDFKQLSDNELRRKLDERILKLAQENREGRERLRTAKSFELLRKAQASMSVKFGFQKPLRDDAFLESRPLSKCKVSSEETIPFLYELKGLLGNDS</sequence>
<comment type="function">
    <text evidence="1">Required for peroxisome inheritance. Acts as the peroxisome-specific receptor for the myosin V motor MYO2 (By similarity).</text>
</comment>
<comment type="subunit">
    <text evidence="1">Interacts with MYO2.</text>
</comment>
<comment type="subcellular location">
    <subcellularLocation>
        <location evidence="1">Peroxisome membrane</location>
        <topology evidence="1">Single-pass membrane protein</topology>
    </subcellularLocation>
</comment>
<comment type="similarity">
    <text evidence="3">Belongs to the INP2 family.</text>
</comment>
<evidence type="ECO:0000250" key="1"/>
<evidence type="ECO:0000255" key="2"/>
<evidence type="ECO:0000305" key="3"/>
<gene>
    <name type="primary">INP2</name>
    <name type="ORF">SCY_4338</name>
</gene>
<name>INP2_YEAS7</name>
<accession>A6ZMM2</accession>
<proteinExistence type="inferred from homology"/>
<feature type="chain" id="PRO_0000308735" description="Inheritance of peroxisomes protein 2">
    <location>
        <begin position="1"/>
        <end position="705"/>
    </location>
</feature>
<feature type="transmembrane region" description="Helical" evidence="2">
    <location>
        <begin position="215"/>
        <end position="231"/>
    </location>
</feature>
<feature type="glycosylation site" description="N-linked (GlcNAc...) asparagine" evidence="2">
    <location>
        <position position="79"/>
    </location>
</feature>
<feature type="glycosylation site" description="N-linked (GlcNAc...) asparagine" evidence="2">
    <location>
        <position position="275"/>
    </location>
</feature>
<feature type="glycosylation site" description="N-linked (GlcNAc...) asparagine" evidence="2">
    <location>
        <position position="343"/>
    </location>
</feature>
<feature type="glycosylation site" description="N-linked (GlcNAc...) asparagine" evidence="2">
    <location>
        <position position="344"/>
    </location>
</feature>
<feature type="glycosylation site" description="N-linked (GlcNAc...) asparagine" evidence="2">
    <location>
        <position position="379"/>
    </location>
</feature>
<feature type="glycosylation site" description="N-linked (GlcNAc...) asparagine" evidence="2">
    <location>
        <position position="517"/>
    </location>
</feature>
<feature type="glycosylation site" description="N-linked (GlcNAc...) asparagine" evidence="2">
    <location>
        <position position="569"/>
    </location>
</feature>
<feature type="glycosylation site" description="N-linked (GlcNAc...) asparagine" evidence="2">
    <location>
        <position position="574"/>
    </location>
</feature>
<keyword id="KW-0325">Glycoprotein</keyword>
<keyword id="KW-0472">Membrane</keyword>
<keyword id="KW-0576">Peroxisome</keyword>
<keyword id="KW-0675">Receptor</keyword>
<keyword id="KW-0812">Transmembrane</keyword>
<keyword id="KW-1133">Transmembrane helix</keyword>
<organism>
    <name type="scientific">Saccharomyces cerevisiae (strain YJM789)</name>
    <name type="common">Baker's yeast</name>
    <dbReference type="NCBI Taxonomy" id="307796"/>
    <lineage>
        <taxon>Eukaryota</taxon>
        <taxon>Fungi</taxon>
        <taxon>Dikarya</taxon>
        <taxon>Ascomycota</taxon>
        <taxon>Saccharomycotina</taxon>
        <taxon>Saccharomycetes</taxon>
        <taxon>Saccharomycetales</taxon>
        <taxon>Saccharomycetaceae</taxon>
        <taxon>Saccharomyces</taxon>
    </lineage>
</organism>
<reference key="1">
    <citation type="journal article" date="2007" name="Proc. Natl. Acad. Sci. U.S.A.">
        <title>Genome sequencing and comparative analysis of Saccharomyces cerevisiae strain YJM789.</title>
        <authorList>
            <person name="Wei W."/>
            <person name="McCusker J.H."/>
            <person name="Hyman R.W."/>
            <person name="Jones T."/>
            <person name="Ning Y."/>
            <person name="Cao Z."/>
            <person name="Gu Z."/>
            <person name="Bruno D."/>
            <person name="Miranda M."/>
            <person name="Nguyen M."/>
            <person name="Wilhelmy J."/>
            <person name="Komp C."/>
            <person name="Tamse R."/>
            <person name="Wang X."/>
            <person name="Jia P."/>
            <person name="Luedi P."/>
            <person name="Oefner P.J."/>
            <person name="David L."/>
            <person name="Dietrich F.S."/>
            <person name="Li Y."/>
            <person name="Davis R.W."/>
            <person name="Steinmetz L.M."/>
        </authorList>
    </citation>
    <scope>NUCLEOTIDE SEQUENCE [LARGE SCALE GENOMIC DNA]</scope>
    <source>
        <strain>YJM789</strain>
    </source>
</reference>
<protein>
    <recommendedName>
        <fullName>Inheritance of peroxisomes protein 2</fullName>
    </recommendedName>
</protein>
<dbReference type="EMBL" id="AAFW02000021">
    <property type="protein sequence ID" value="EDN64096.1"/>
    <property type="molecule type" value="Genomic_DNA"/>
</dbReference>
<dbReference type="SMR" id="A6ZMM2"/>
<dbReference type="GlyCosmos" id="A6ZMM2">
    <property type="glycosylation" value="8 sites, No reported glycans"/>
</dbReference>
<dbReference type="HOGENOM" id="CLU_024345_0_0_1"/>
<dbReference type="Proteomes" id="UP000007060">
    <property type="component" value="Unassembled WGS sequence"/>
</dbReference>
<dbReference type="GO" id="GO:0005778">
    <property type="term" value="C:peroxisomal membrane"/>
    <property type="evidence" value="ECO:0007669"/>
    <property type="project" value="UniProtKB-SubCell"/>
</dbReference>
<dbReference type="GO" id="GO:0045033">
    <property type="term" value="P:peroxisome inheritance"/>
    <property type="evidence" value="ECO:0007669"/>
    <property type="project" value="InterPro"/>
</dbReference>
<dbReference type="InterPro" id="IPR026235">
    <property type="entry name" value="INP2"/>
</dbReference>
<dbReference type="PRINTS" id="PR02104">
    <property type="entry name" value="INPROXISOME2"/>
</dbReference>